<evidence type="ECO:0000255" key="1">
    <source>
        <dbReference type="HAMAP-Rule" id="MF_00505"/>
    </source>
</evidence>
<organism>
    <name type="scientific">Xylella fastidiosa (strain Temecula1 / ATCC 700964)</name>
    <dbReference type="NCBI Taxonomy" id="183190"/>
    <lineage>
        <taxon>Bacteria</taxon>
        <taxon>Pseudomonadati</taxon>
        <taxon>Pseudomonadota</taxon>
        <taxon>Gammaproteobacteria</taxon>
        <taxon>Lysobacterales</taxon>
        <taxon>Lysobacteraceae</taxon>
        <taxon>Xylella</taxon>
    </lineage>
</organism>
<gene>
    <name evidence="1" type="primary">htpG</name>
    <name type="ordered locus">PD_0273</name>
</gene>
<accession>Q87EN0</accession>
<keyword id="KW-0067">ATP-binding</keyword>
<keyword id="KW-0143">Chaperone</keyword>
<keyword id="KW-0963">Cytoplasm</keyword>
<keyword id="KW-0547">Nucleotide-binding</keyword>
<keyword id="KW-1185">Reference proteome</keyword>
<keyword id="KW-0346">Stress response</keyword>
<feature type="chain" id="PRO_0000063030" description="Chaperone protein HtpG">
    <location>
        <begin position="1"/>
        <end position="636"/>
    </location>
</feature>
<feature type="region of interest" description="A; substrate-binding" evidence="1">
    <location>
        <begin position="1"/>
        <end position="344"/>
    </location>
</feature>
<feature type="region of interest" description="B" evidence="1">
    <location>
        <begin position="345"/>
        <end position="561"/>
    </location>
</feature>
<feature type="region of interest" description="C" evidence="1">
    <location>
        <begin position="562"/>
        <end position="636"/>
    </location>
</feature>
<proteinExistence type="inferred from homology"/>
<comment type="function">
    <text evidence="1">Molecular chaperone. Has ATPase activity.</text>
</comment>
<comment type="subunit">
    <text evidence="1">Homodimer.</text>
</comment>
<comment type="subcellular location">
    <subcellularLocation>
        <location evidence="1">Cytoplasm</location>
    </subcellularLocation>
</comment>
<comment type="similarity">
    <text evidence="1">Belongs to the heat shock protein 90 family.</text>
</comment>
<dbReference type="EMBL" id="AE009442">
    <property type="protein sequence ID" value="AAO28159.1"/>
    <property type="molecule type" value="Genomic_DNA"/>
</dbReference>
<dbReference type="RefSeq" id="WP_004087912.1">
    <property type="nucleotide sequence ID" value="NC_004556.1"/>
</dbReference>
<dbReference type="SMR" id="Q87EN0"/>
<dbReference type="KEGG" id="xft:PD_0273"/>
<dbReference type="HOGENOM" id="CLU_006684_3_0_6"/>
<dbReference type="Proteomes" id="UP000002516">
    <property type="component" value="Chromosome"/>
</dbReference>
<dbReference type="GO" id="GO:0005737">
    <property type="term" value="C:cytoplasm"/>
    <property type="evidence" value="ECO:0007669"/>
    <property type="project" value="UniProtKB-SubCell"/>
</dbReference>
<dbReference type="GO" id="GO:0005524">
    <property type="term" value="F:ATP binding"/>
    <property type="evidence" value="ECO:0007669"/>
    <property type="project" value="UniProtKB-UniRule"/>
</dbReference>
<dbReference type="GO" id="GO:0016887">
    <property type="term" value="F:ATP hydrolysis activity"/>
    <property type="evidence" value="ECO:0007669"/>
    <property type="project" value="InterPro"/>
</dbReference>
<dbReference type="GO" id="GO:0140662">
    <property type="term" value="F:ATP-dependent protein folding chaperone"/>
    <property type="evidence" value="ECO:0007669"/>
    <property type="project" value="InterPro"/>
</dbReference>
<dbReference type="GO" id="GO:0051082">
    <property type="term" value="F:unfolded protein binding"/>
    <property type="evidence" value="ECO:0007669"/>
    <property type="project" value="UniProtKB-UniRule"/>
</dbReference>
<dbReference type="CDD" id="cd16927">
    <property type="entry name" value="HATPase_Hsp90-like"/>
    <property type="match status" value="1"/>
</dbReference>
<dbReference type="FunFam" id="3.30.230.80:FF:000002">
    <property type="entry name" value="Molecular chaperone HtpG"/>
    <property type="match status" value="1"/>
</dbReference>
<dbReference type="FunFam" id="3.30.565.10:FF:000009">
    <property type="entry name" value="Molecular chaperone HtpG"/>
    <property type="match status" value="1"/>
</dbReference>
<dbReference type="Gene3D" id="3.30.230.80">
    <property type="match status" value="1"/>
</dbReference>
<dbReference type="Gene3D" id="3.40.50.11260">
    <property type="match status" value="1"/>
</dbReference>
<dbReference type="Gene3D" id="1.20.120.790">
    <property type="entry name" value="Heat shock protein 90, C-terminal domain"/>
    <property type="match status" value="1"/>
</dbReference>
<dbReference type="Gene3D" id="3.30.565.10">
    <property type="entry name" value="Histidine kinase-like ATPase, C-terminal domain"/>
    <property type="match status" value="1"/>
</dbReference>
<dbReference type="HAMAP" id="MF_00505">
    <property type="entry name" value="HSP90"/>
    <property type="match status" value="1"/>
</dbReference>
<dbReference type="InterPro" id="IPR036890">
    <property type="entry name" value="HATPase_C_sf"/>
</dbReference>
<dbReference type="InterPro" id="IPR019805">
    <property type="entry name" value="Heat_shock_protein_90_CS"/>
</dbReference>
<dbReference type="InterPro" id="IPR037196">
    <property type="entry name" value="HSP90_C"/>
</dbReference>
<dbReference type="InterPro" id="IPR001404">
    <property type="entry name" value="Hsp90_fam"/>
</dbReference>
<dbReference type="InterPro" id="IPR020575">
    <property type="entry name" value="Hsp90_N"/>
</dbReference>
<dbReference type="InterPro" id="IPR020568">
    <property type="entry name" value="Ribosomal_Su5_D2-typ_SF"/>
</dbReference>
<dbReference type="NCBIfam" id="NF003555">
    <property type="entry name" value="PRK05218.1"/>
    <property type="match status" value="1"/>
</dbReference>
<dbReference type="PANTHER" id="PTHR11528">
    <property type="entry name" value="HEAT SHOCK PROTEIN 90 FAMILY MEMBER"/>
    <property type="match status" value="1"/>
</dbReference>
<dbReference type="Pfam" id="PF13589">
    <property type="entry name" value="HATPase_c_3"/>
    <property type="match status" value="1"/>
</dbReference>
<dbReference type="Pfam" id="PF00183">
    <property type="entry name" value="HSP90"/>
    <property type="match status" value="1"/>
</dbReference>
<dbReference type="PIRSF" id="PIRSF002583">
    <property type="entry name" value="Hsp90"/>
    <property type="match status" value="1"/>
</dbReference>
<dbReference type="PRINTS" id="PR00775">
    <property type="entry name" value="HEATSHOCK90"/>
</dbReference>
<dbReference type="SMART" id="SM00387">
    <property type="entry name" value="HATPase_c"/>
    <property type="match status" value="1"/>
</dbReference>
<dbReference type="SUPFAM" id="SSF55874">
    <property type="entry name" value="ATPase domain of HSP90 chaperone/DNA topoisomerase II/histidine kinase"/>
    <property type="match status" value="1"/>
</dbReference>
<dbReference type="SUPFAM" id="SSF110942">
    <property type="entry name" value="HSP90 C-terminal domain"/>
    <property type="match status" value="1"/>
</dbReference>
<dbReference type="SUPFAM" id="SSF54211">
    <property type="entry name" value="Ribosomal protein S5 domain 2-like"/>
    <property type="match status" value="1"/>
</dbReference>
<dbReference type="PROSITE" id="PS00298">
    <property type="entry name" value="HSP90"/>
    <property type="match status" value="1"/>
</dbReference>
<reference key="1">
    <citation type="journal article" date="2003" name="J. Bacteriol.">
        <title>Comparative analyses of the complete genome sequences of Pierce's disease and citrus variegated chlorosis strains of Xylella fastidiosa.</title>
        <authorList>
            <person name="Van Sluys M.A."/>
            <person name="de Oliveira M.C."/>
            <person name="Monteiro-Vitorello C.B."/>
            <person name="Miyaki C.Y."/>
            <person name="Furlan L.R."/>
            <person name="Camargo L.E.A."/>
            <person name="da Silva A.C.R."/>
            <person name="Moon D.H."/>
            <person name="Takita M.A."/>
            <person name="Lemos E.G.M."/>
            <person name="Machado M.A."/>
            <person name="Ferro M.I.T."/>
            <person name="da Silva F.R."/>
            <person name="Goldman M.H.S."/>
            <person name="Goldman G.H."/>
            <person name="Lemos M.V.F."/>
            <person name="El-Dorry H."/>
            <person name="Tsai S.M."/>
            <person name="Carrer H."/>
            <person name="Carraro D.M."/>
            <person name="de Oliveira R.C."/>
            <person name="Nunes L.R."/>
            <person name="Siqueira W.J."/>
            <person name="Coutinho L.L."/>
            <person name="Kimura E.T."/>
            <person name="Ferro E.S."/>
            <person name="Harakava R."/>
            <person name="Kuramae E.E."/>
            <person name="Marino C.L."/>
            <person name="Giglioti E."/>
            <person name="Abreu I.L."/>
            <person name="Alves L.M.C."/>
            <person name="do Amaral A.M."/>
            <person name="Baia G.S."/>
            <person name="Blanco S.R."/>
            <person name="Brito M.S."/>
            <person name="Cannavan F.S."/>
            <person name="Celestino A.V."/>
            <person name="da Cunha A.F."/>
            <person name="Fenille R.C."/>
            <person name="Ferro J.A."/>
            <person name="Formighieri E.F."/>
            <person name="Kishi L.T."/>
            <person name="Leoni S.G."/>
            <person name="Oliveira A.R."/>
            <person name="Rosa V.E. Jr."/>
            <person name="Sassaki F.T."/>
            <person name="Sena J.A.D."/>
            <person name="de Souza A.A."/>
            <person name="Truffi D."/>
            <person name="Tsukumo F."/>
            <person name="Yanai G.M."/>
            <person name="Zaros L.G."/>
            <person name="Civerolo E.L."/>
            <person name="Simpson A.J.G."/>
            <person name="Almeida N.F. Jr."/>
            <person name="Setubal J.C."/>
            <person name="Kitajima J.P."/>
        </authorList>
    </citation>
    <scope>NUCLEOTIDE SEQUENCE [LARGE SCALE GENOMIC DNA]</scope>
    <source>
        <strain>Temecula1 / ATCC 700964</strain>
    </source>
</reference>
<name>HTPG_XYLFT</name>
<protein>
    <recommendedName>
        <fullName evidence="1">Chaperone protein HtpG</fullName>
    </recommendedName>
    <alternativeName>
        <fullName evidence="1">Heat shock protein HtpG</fullName>
    </alternativeName>
    <alternativeName>
        <fullName evidence="1">High temperature protein G</fullName>
    </alternativeName>
</protein>
<sequence length="636" mass="71745">MTLEADKQTHGFQTEVKQLLQLMIHSLYSNKEIFLRELISNAADAADKLRFEALSAPSLLEEDPNLRIRVEFDKQAHTITIDDNGIGMSRDEAIAHLGTIAKSGTADFLKALSGDQRKDANLIGQFGVGFYSAFIVADHVDVYSRRAGLTAAEGVHWSSKGEGNFEVATIDKPQRGTRVVLHLKENEQHFAEGWTLRSTLKKYSDHIGLPIEMLKEHHGKEEEKDTPQEAEWEAVNKASALWTRPKNDIKDEEYQEFYKHISHDMTNPLAWSHNKVEGKLEYTSLLYVPTRAPFDLYHRNAAKGLKLYVQRVFIMDQAEQFLPLYLRFIKGVVDSADLSLNVSREILQSGPVVDSMKTALSKRALDMLEKLAKDAPEDYKTFWKNFGQVLKEGPAEDYSNREKVASLLRFASTYDTSGDPSVALTDYIARMKEGQDKLYYLTGESYAQIKDSPYLEVFRKKGIEVLLLVDRIDEWLMNYLHEFDGKSFVDIARGDLDLGNLDSEADKKAQEEIAKTKEALASRIKATLGEDVAEVRVSHRLTDSPAVLAIGEGDLGLQMRQLLEASGQKVPETKPVFEFNPSHPLIEKLDAEQDMDRFADLSRILFDQAALAAGDSLKDPANYVRRLNKLLLELSA</sequence>